<name>ARFE_ARATH</name>
<protein>
    <recommendedName>
        <fullName>Auxin response factor 5</fullName>
    </recommendedName>
    <alternativeName>
        <fullName>Auxin-responsive protein IAA24</fullName>
    </alternativeName>
    <alternativeName>
        <fullName>Transcription factor MONOPTEROS</fullName>
    </alternativeName>
</protein>
<organism>
    <name type="scientific">Arabidopsis thaliana</name>
    <name type="common">Mouse-ear cress</name>
    <dbReference type="NCBI Taxonomy" id="3702"/>
    <lineage>
        <taxon>Eukaryota</taxon>
        <taxon>Viridiplantae</taxon>
        <taxon>Streptophyta</taxon>
        <taxon>Embryophyta</taxon>
        <taxon>Tracheophyta</taxon>
        <taxon>Spermatophyta</taxon>
        <taxon>Magnoliopsida</taxon>
        <taxon>eudicotyledons</taxon>
        <taxon>Gunneridae</taxon>
        <taxon>Pentapetalae</taxon>
        <taxon>rosids</taxon>
        <taxon>malvids</taxon>
        <taxon>Brassicales</taxon>
        <taxon>Brassicaceae</taxon>
        <taxon>Camelineae</taxon>
        <taxon>Arabidopsis</taxon>
    </lineage>
</organism>
<accession>P93024</accession>
<accession>A5YYU1</accession>
<accession>A5YYU8</accession>
<accession>A5YYW1</accession>
<accession>A5YYW2</accession>
<accession>O64965</accession>
<accession>Q33DU8</accession>
<accession>Q9FXI3</accession>
<gene>
    <name type="primary">ARF5</name>
    <name type="synonym">IAA24</name>
    <name type="synonym">MP</name>
    <name type="ordered locus">At1g19850</name>
    <name type="ORF">F6F9.10</name>
</gene>
<sequence length="902" mass="99650">MMASLSCVEDKMKTSCLVNGGGTITTTTSQSTLLEEMKLLKDQSGTRKPVINSELWHACAGPLVCLPQVGSLVYYFSQGHSEQVAVSTRRSATTQVPNYPNLPSQLMCQVHNVTLHADKDSDEIYAQMSLQPVHSERDVFPVPDFGMLRGSKHPTEFFCKTLTASDTSTHGGFSVPRRAAEKLFPPLDYSAQPPTQELVVRDLHENTWTFRHIYRGQPKRHLLTTGWSLFVGSKRLRAGDSVLFIRDEKSQLMVGVRRANRQQTALPSSVLSADSMHIGVLAAAAHATANRTPFLIFYNPRACPAEFVIPLAKYRKAICGSQLSVGMRFGMMFETEDSGKRRYMGTIVGISDLDPLRWPGSKWRNLQVEWDEPGCNDKPTRVSPWDIETPESLFIFPSLTSGLKRQLHPSYFAGETEWGSLIKRPLIRVPDSANGIMPYASFPSMASEQLMKMMMRPHNNQNVPSFMSEMQQNIVMGNGGLLGDMKMQQPLMMNQKSEMVQPQNKLTVNPSASNTSGQEQNLSQSMSAPAKPENSTLSGCSSGRVQHGLEQSMEQASQVTTSTVCNEEKVNQLLQKPGASSPVQADQCLDITHQIYQPQSDPINGFSFLETDELTSQVSSFQSLAGSYKQPFILSSQDSSAVVLPDSTNSPLFHDVWDTQLNGLKFDQFSPLMQQDLYASQNICMSNSTTSNILDPPLSNTVLDDFCAIKDTDFQNHPSGCLVGNNNTSFAQDVQSQITSASFADSQAFSRQDFPDNSGGTGTSSSNVDFDDCSLRQNSKGSSWQKIATPRVRTYTKVQKTGSVGRSIDVTSFKDYEELKSAIECMFGLEGLLTHPQSSGWKLVYVDYESDVLLVGDDPWEEFVGCVRCIRILSPTEVQQMSEEGMKLLNSAGINDLKTSVS</sequence>
<proteinExistence type="evidence at protein level"/>
<feature type="chain" id="PRO_0000111509" description="Auxin response factor 5">
    <location>
        <begin position="1"/>
        <end position="902"/>
    </location>
</feature>
<feature type="domain" description="PB1" evidence="2">
    <location>
        <begin position="793"/>
        <end position="877"/>
    </location>
</feature>
<feature type="DNA-binding region" description="TF-B3" evidence="1">
    <location>
        <begin position="158"/>
        <end position="260"/>
    </location>
</feature>
<feature type="region of interest" description="Disordered" evidence="3">
    <location>
        <begin position="497"/>
        <end position="543"/>
    </location>
</feature>
<feature type="sequence variant" description="In strain; cv. Ag-0." evidence="8">
    <original>Y</original>
    <variation>F</variation>
    <location>
        <position position="439"/>
    </location>
</feature>
<feature type="sequence variant" description="In strain: cv. Cvi-1." evidence="8">
    <original>M</original>
    <variation>T</variation>
    <location>
        <position position="526"/>
    </location>
</feature>
<feature type="sequence variant" description="In strain: cv. Kas-1." evidence="8">
    <location>
        <begin position="539"/>
        <end position="542"/>
    </location>
</feature>
<feature type="sequence variant" evidence="11">
    <original>T</original>
    <variation>I</variation>
    <location>
        <position position="796"/>
    </location>
</feature>
<feature type="helix" evidence="14">
    <location>
        <begin position="53"/>
        <end position="60"/>
    </location>
</feature>
<feature type="strand" evidence="14">
    <location>
        <begin position="72"/>
        <end position="75"/>
    </location>
</feature>
<feature type="helix" evidence="14">
    <location>
        <begin position="77"/>
        <end position="88"/>
    </location>
</feature>
<feature type="strand" evidence="14">
    <location>
        <begin position="104"/>
        <end position="117"/>
    </location>
</feature>
<feature type="turn" evidence="14">
    <location>
        <begin position="119"/>
        <end position="121"/>
    </location>
</feature>
<feature type="strand" evidence="14">
    <location>
        <begin position="124"/>
        <end position="132"/>
    </location>
</feature>
<feature type="helix" evidence="14">
    <location>
        <begin position="136"/>
        <end position="138"/>
    </location>
</feature>
<feature type="helix" evidence="14">
    <location>
        <begin position="142"/>
        <end position="145"/>
    </location>
</feature>
<feature type="strand" evidence="14">
    <location>
        <begin position="155"/>
        <end position="161"/>
    </location>
</feature>
<feature type="turn" evidence="14">
    <location>
        <begin position="165"/>
        <end position="167"/>
    </location>
</feature>
<feature type="turn" evidence="14">
    <location>
        <begin position="169"/>
        <end position="171"/>
    </location>
</feature>
<feature type="strand" evidence="14">
    <location>
        <begin position="173"/>
        <end position="175"/>
    </location>
</feature>
<feature type="helix" evidence="14">
    <location>
        <begin position="177"/>
        <end position="183"/>
    </location>
</feature>
<feature type="strand" evidence="14">
    <location>
        <begin position="191"/>
        <end position="193"/>
    </location>
</feature>
<feature type="strand" evidence="14">
    <location>
        <begin position="195"/>
        <end position="201"/>
    </location>
</feature>
<feature type="strand" evidence="14">
    <location>
        <begin position="207"/>
        <end position="215"/>
    </location>
</feature>
<feature type="turn" evidence="14">
    <location>
        <begin position="216"/>
        <end position="219"/>
    </location>
</feature>
<feature type="strand" evidence="14">
    <location>
        <begin position="220"/>
        <end position="223"/>
    </location>
</feature>
<feature type="helix" evidence="14">
    <location>
        <begin position="227"/>
        <end position="234"/>
    </location>
</feature>
<feature type="strand" evidence="14">
    <location>
        <begin position="241"/>
        <end position="246"/>
    </location>
</feature>
<feature type="strand" evidence="14">
    <location>
        <begin position="252"/>
        <end position="257"/>
    </location>
</feature>
<feature type="strand" evidence="14">
    <location>
        <begin position="269"/>
        <end position="271"/>
    </location>
</feature>
<feature type="helix" evidence="14">
    <location>
        <begin position="273"/>
        <end position="290"/>
    </location>
</feature>
<feature type="strand" evidence="14">
    <location>
        <begin position="294"/>
        <end position="298"/>
    </location>
</feature>
<feature type="turn" evidence="14">
    <location>
        <begin position="300"/>
        <end position="302"/>
    </location>
</feature>
<feature type="strand" evidence="14">
    <location>
        <begin position="308"/>
        <end position="310"/>
    </location>
</feature>
<feature type="helix" evidence="14">
    <location>
        <begin position="311"/>
        <end position="317"/>
    </location>
</feature>
<feature type="turn" evidence="14">
    <location>
        <begin position="318"/>
        <end position="320"/>
    </location>
</feature>
<feature type="strand" evidence="14">
    <location>
        <begin position="328"/>
        <end position="334"/>
    </location>
</feature>
<feature type="strand" evidence="14">
    <location>
        <begin position="340"/>
        <end position="350"/>
    </location>
</feature>
<feature type="turn" evidence="14">
    <location>
        <begin position="355"/>
        <end position="357"/>
    </location>
</feature>
<feature type="strand" evidence="14">
    <location>
        <begin position="366"/>
        <end position="371"/>
    </location>
</feature>
<feature type="turn" evidence="14">
    <location>
        <begin position="374"/>
        <end position="376"/>
    </location>
</feature>
<feature type="strand" evidence="14">
    <location>
        <begin position="380"/>
        <end position="382"/>
    </location>
</feature>
<feature type="helix" evidence="14">
    <location>
        <begin position="384"/>
        <end position="386"/>
    </location>
</feature>
<feature type="strand" evidence="13">
    <location>
        <begin position="795"/>
        <end position="800"/>
    </location>
</feature>
<feature type="strand" evidence="13">
    <location>
        <begin position="805"/>
        <end position="808"/>
    </location>
</feature>
<feature type="helix" evidence="13">
    <location>
        <begin position="810"/>
        <end position="812"/>
    </location>
</feature>
<feature type="strand" evidence="15">
    <location>
        <begin position="813"/>
        <end position="815"/>
    </location>
</feature>
<feature type="helix" evidence="13">
    <location>
        <begin position="816"/>
        <end position="827"/>
    </location>
</feature>
<feature type="turn" evidence="13">
    <location>
        <begin position="830"/>
        <end position="832"/>
    </location>
</feature>
<feature type="turn" evidence="13">
    <location>
        <begin position="836"/>
        <end position="838"/>
    </location>
</feature>
<feature type="strand" evidence="13">
    <location>
        <begin position="842"/>
        <end position="847"/>
    </location>
</feature>
<feature type="strand" evidence="13">
    <location>
        <begin position="852"/>
        <end position="854"/>
    </location>
</feature>
<feature type="helix" evidence="13">
    <location>
        <begin position="860"/>
        <end position="866"/>
    </location>
</feature>
<feature type="strand" evidence="13">
    <location>
        <begin position="867"/>
        <end position="873"/>
    </location>
</feature>
<feature type="helix" evidence="13">
    <location>
        <begin position="875"/>
        <end position="889"/>
    </location>
</feature>
<dbReference type="EMBL" id="AF037228">
    <property type="protein sequence ID" value="AAC39410.1"/>
    <property type="molecule type" value="Genomic_DNA"/>
</dbReference>
<dbReference type="EMBL" id="AF037229">
    <property type="protein sequence ID" value="AAC60794.1"/>
    <property type="molecule type" value="mRNA"/>
</dbReference>
<dbReference type="EMBL" id="AC007797">
    <property type="protein sequence ID" value="AAG12546.1"/>
    <property type="status" value="ALT_SEQ"/>
    <property type="molecule type" value="Genomic_DNA"/>
</dbReference>
<dbReference type="EMBL" id="CP002684">
    <property type="protein sequence ID" value="AEE29906.1"/>
    <property type="molecule type" value="Genomic_DNA"/>
</dbReference>
<dbReference type="EMBL" id="AF334716">
    <property type="protein sequence ID" value="AAG50094.1"/>
    <property type="molecule type" value="mRNA"/>
</dbReference>
<dbReference type="EMBL" id="BT002050">
    <property type="protein sequence ID" value="AAN72061.1"/>
    <property type="molecule type" value="mRNA"/>
</dbReference>
<dbReference type="EMBL" id="BT008805">
    <property type="protein sequence ID" value="AAP68244.1"/>
    <property type="molecule type" value="mRNA"/>
</dbReference>
<dbReference type="EMBL" id="AB199792">
    <property type="protein sequence ID" value="BAE48152.1"/>
    <property type="molecule type" value="mRNA"/>
</dbReference>
<dbReference type="EMBL" id="U79557">
    <property type="protein sequence ID" value="AAB92476.1"/>
    <property type="molecule type" value="mRNA"/>
</dbReference>
<dbReference type="EMBL" id="EF598523">
    <property type="protein sequence ID" value="ABR09007.1"/>
    <property type="molecule type" value="Genomic_DNA"/>
</dbReference>
<dbReference type="EMBL" id="EF598524">
    <property type="protein sequence ID" value="ABR09008.1"/>
    <property type="molecule type" value="Genomic_DNA"/>
</dbReference>
<dbReference type="EMBL" id="EF598525">
    <property type="protein sequence ID" value="ABR09009.1"/>
    <property type="molecule type" value="Genomic_DNA"/>
</dbReference>
<dbReference type="EMBL" id="EF598526">
    <property type="protein sequence ID" value="ABR09010.1"/>
    <property type="molecule type" value="Genomic_DNA"/>
</dbReference>
<dbReference type="EMBL" id="EF598527">
    <property type="protein sequence ID" value="ABR09011.1"/>
    <property type="molecule type" value="Genomic_DNA"/>
</dbReference>
<dbReference type="EMBL" id="EF598528">
    <property type="protein sequence ID" value="ABR09012.1"/>
    <property type="molecule type" value="Genomic_DNA"/>
</dbReference>
<dbReference type="EMBL" id="EF598529">
    <property type="protein sequence ID" value="ABR09013.1"/>
    <property type="molecule type" value="Genomic_DNA"/>
</dbReference>
<dbReference type="EMBL" id="EF598530">
    <property type="protein sequence ID" value="ABR09014.1"/>
    <property type="molecule type" value="Genomic_DNA"/>
</dbReference>
<dbReference type="EMBL" id="EF598531">
    <property type="protein sequence ID" value="ABR09015.1"/>
    <property type="molecule type" value="Genomic_DNA"/>
</dbReference>
<dbReference type="EMBL" id="EF598532">
    <property type="protein sequence ID" value="ABR09016.1"/>
    <property type="molecule type" value="Genomic_DNA"/>
</dbReference>
<dbReference type="EMBL" id="EF598533">
    <property type="protein sequence ID" value="ABR09017.1"/>
    <property type="molecule type" value="Genomic_DNA"/>
</dbReference>
<dbReference type="EMBL" id="EF598534">
    <property type="protein sequence ID" value="ABR09018.1"/>
    <property type="molecule type" value="Genomic_DNA"/>
</dbReference>
<dbReference type="EMBL" id="EF598535">
    <property type="protein sequence ID" value="ABR09019.1"/>
    <property type="molecule type" value="Genomic_DNA"/>
</dbReference>
<dbReference type="EMBL" id="EF598536">
    <property type="protein sequence ID" value="ABR09020.1"/>
    <property type="molecule type" value="Genomic_DNA"/>
</dbReference>
<dbReference type="EMBL" id="EF598537">
    <property type="protein sequence ID" value="ABR09021.1"/>
    <property type="molecule type" value="Genomic_DNA"/>
</dbReference>
<dbReference type="EMBL" id="EF598538">
    <property type="protein sequence ID" value="ABR09022.1"/>
    <property type="molecule type" value="Genomic_DNA"/>
</dbReference>
<dbReference type="EMBL" id="EF598539">
    <property type="protein sequence ID" value="ABR09023.1"/>
    <property type="molecule type" value="Genomic_DNA"/>
</dbReference>
<dbReference type="EMBL" id="EF598540">
    <property type="protein sequence ID" value="ABR09024.1"/>
    <property type="molecule type" value="Genomic_DNA"/>
</dbReference>
<dbReference type="EMBL" id="EF598541">
    <property type="protein sequence ID" value="ABR09025.1"/>
    <property type="molecule type" value="Genomic_DNA"/>
</dbReference>
<dbReference type="EMBL" id="EF598542">
    <property type="protein sequence ID" value="ABR09026.1"/>
    <property type="molecule type" value="Genomic_DNA"/>
</dbReference>
<dbReference type="EMBL" id="EF598543">
    <property type="protein sequence ID" value="ABR09027.1"/>
    <property type="molecule type" value="Genomic_DNA"/>
</dbReference>
<dbReference type="EMBL" id="EF598544">
    <property type="protein sequence ID" value="ABR09028.1"/>
    <property type="molecule type" value="Genomic_DNA"/>
</dbReference>
<dbReference type="EMBL" id="EF598545">
    <property type="protein sequence ID" value="ABR09029.1"/>
    <property type="molecule type" value="Genomic_DNA"/>
</dbReference>
<dbReference type="EMBL" id="EF598546">
    <property type="protein sequence ID" value="ABR09030.1"/>
    <property type="molecule type" value="Genomic_DNA"/>
</dbReference>
<dbReference type="PIR" id="G86331">
    <property type="entry name" value="G86331"/>
</dbReference>
<dbReference type="PIR" id="T51807">
    <property type="entry name" value="T51807"/>
</dbReference>
<dbReference type="RefSeq" id="NP_173414.1">
    <property type="nucleotide sequence ID" value="NM_101840.3"/>
</dbReference>
<dbReference type="PDB" id="4CHK">
    <property type="method" value="X-ray"/>
    <property type="resolution" value="2.85 A"/>
    <property type="chains" value="A/B/C/D/E/F/G/H=779-902"/>
</dbReference>
<dbReference type="PDB" id="4LDU">
    <property type="method" value="X-ray"/>
    <property type="resolution" value="2.15 A"/>
    <property type="chains" value="A=1-390"/>
</dbReference>
<dbReference type="PDB" id="6L5K">
    <property type="method" value="X-ray"/>
    <property type="resolution" value="2.91 A"/>
    <property type="chains" value="A=788-885"/>
</dbReference>
<dbReference type="PDBsum" id="4CHK"/>
<dbReference type="PDBsum" id="4LDU"/>
<dbReference type="PDBsum" id="6L5K"/>
<dbReference type="SMR" id="P93024"/>
<dbReference type="BioGRID" id="23812">
    <property type="interactions" value="38"/>
</dbReference>
<dbReference type="FunCoup" id="P93024">
    <property type="interactions" value="1150"/>
</dbReference>
<dbReference type="IntAct" id="P93024">
    <property type="interactions" value="37"/>
</dbReference>
<dbReference type="STRING" id="3702.P93024"/>
<dbReference type="iPTMnet" id="P93024"/>
<dbReference type="MetOSite" id="P93024"/>
<dbReference type="PaxDb" id="3702-AT1G19850.1"/>
<dbReference type="ProteomicsDB" id="246991"/>
<dbReference type="EnsemblPlants" id="AT1G19850.1">
    <property type="protein sequence ID" value="AT1G19850.1"/>
    <property type="gene ID" value="AT1G19850"/>
</dbReference>
<dbReference type="GeneID" id="838573"/>
<dbReference type="Gramene" id="AT1G19850.1">
    <property type="protein sequence ID" value="AT1G19850.1"/>
    <property type="gene ID" value="AT1G19850"/>
</dbReference>
<dbReference type="KEGG" id="ath:AT1G19850"/>
<dbReference type="Araport" id="AT1G19850"/>
<dbReference type="TAIR" id="AT1G19850">
    <property type="gene designation" value="MP"/>
</dbReference>
<dbReference type="eggNOG" id="ENOG502QQ0Y">
    <property type="taxonomic scope" value="Eukaryota"/>
</dbReference>
<dbReference type="HOGENOM" id="CLU_002626_2_1_1"/>
<dbReference type="InParanoid" id="P93024"/>
<dbReference type="OrthoDB" id="1368538at2759"/>
<dbReference type="PhylomeDB" id="P93024"/>
<dbReference type="EvolutionaryTrace" id="P93024"/>
<dbReference type="PRO" id="PR:P93024"/>
<dbReference type="Proteomes" id="UP000006548">
    <property type="component" value="Chromosome 1"/>
</dbReference>
<dbReference type="ExpressionAtlas" id="P93024">
    <property type="expression patterns" value="baseline and differential"/>
</dbReference>
<dbReference type="GO" id="GO:0005634">
    <property type="term" value="C:nucleus"/>
    <property type="evidence" value="ECO:0000250"/>
    <property type="project" value="TAIR"/>
</dbReference>
<dbReference type="GO" id="GO:0003700">
    <property type="term" value="F:DNA-binding transcription factor activity"/>
    <property type="evidence" value="ECO:0000250"/>
    <property type="project" value="TAIR"/>
</dbReference>
<dbReference type="GO" id="GO:0042802">
    <property type="term" value="F:identical protein binding"/>
    <property type="evidence" value="ECO:0000353"/>
    <property type="project" value="IntAct"/>
</dbReference>
<dbReference type="GO" id="GO:0000976">
    <property type="term" value="F:transcription cis-regulatory region binding"/>
    <property type="evidence" value="ECO:0000314"/>
    <property type="project" value="TAIR"/>
</dbReference>
<dbReference type="GO" id="GO:0009734">
    <property type="term" value="P:auxin-activated signaling pathway"/>
    <property type="evidence" value="ECO:0007669"/>
    <property type="project" value="UniProtKB-KW"/>
</dbReference>
<dbReference type="GO" id="GO:0009793">
    <property type="term" value="P:embryo development ending in seed dormancy"/>
    <property type="evidence" value="ECO:0000316"/>
    <property type="project" value="TAIR"/>
</dbReference>
<dbReference type="GO" id="GO:0009908">
    <property type="term" value="P:flower development"/>
    <property type="evidence" value="ECO:0000316"/>
    <property type="project" value="TAIR"/>
</dbReference>
<dbReference type="GO" id="GO:0010305">
    <property type="term" value="P:leaf vascular tissue pattern formation"/>
    <property type="evidence" value="ECO:0000316"/>
    <property type="project" value="TAIR"/>
</dbReference>
<dbReference type="GO" id="GO:0009942">
    <property type="term" value="P:longitudinal axis specification"/>
    <property type="evidence" value="ECO:0000315"/>
    <property type="project" value="TAIR"/>
</dbReference>
<dbReference type="GO" id="GO:0048507">
    <property type="term" value="P:meristem development"/>
    <property type="evidence" value="ECO:0000316"/>
    <property type="project" value="TAIR"/>
</dbReference>
<dbReference type="GO" id="GO:0006355">
    <property type="term" value="P:regulation of DNA-templated transcription"/>
    <property type="evidence" value="ECO:0000270"/>
    <property type="project" value="TAIR"/>
</dbReference>
<dbReference type="GO" id="GO:0009733">
    <property type="term" value="P:response to auxin"/>
    <property type="evidence" value="ECO:0000270"/>
    <property type="project" value="TAIR"/>
</dbReference>
<dbReference type="GO" id="GO:0048364">
    <property type="term" value="P:root development"/>
    <property type="evidence" value="ECO:0000316"/>
    <property type="project" value="TAIR"/>
</dbReference>
<dbReference type="GO" id="GO:0010051">
    <property type="term" value="P:xylem and phloem pattern formation"/>
    <property type="evidence" value="ECO:0000315"/>
    <property type="project" value="TAIR"/>
</dbReference>
<dbReference type="CDD" id="cd10017">
    <property type="entry name" value="B3_DNA"/>
    <property type="match status" value="1"/>
</dbReference>
<dbReference type="FunFam" id="2.30.30.1040:FF:000001">
    <property type="entry name" value="Auxin response factor"/>
    <property type="match status" value="1"/>
</dbReference>
<dbReference type="FunFam" id="2.40.330.10:FF:000001">
    <property type="entry name" value="Auxin response factor"/>
    <property type="match status" value="1"/>
</dbReference>
<dbReference type="FunFam" id="3.10.20.90:FF:000047">
    <property type="entry name" value="Auxin response factor"/>
    <property type="match status" value="1"/>
</dbReference>
<dbReference type="Gene3D" id="2.30.30.1040">
    <property type="match status" value="1"/>
</dbReference>
<dbReference type="Gene3D" id="2.40.330.10">
    <property type="entry name" value="DNA-binding pseudobarrel domain"/>
    <property type="match status" value="1"/>
</dbReference>
<dbReference type="Gene3D" id="3.10.20.90">
    <property type="entry name" value="Phosphatidylinositol 3-kinase Catalytic Subunit, Chain A, domain 1"/>
    <property type="match status" value="1"/>
</dbReference>
<dbReference type="InterPro" id="IPR010525">
    <property type="entry name" value="ARF_dom"/>
</dbReference>
<dbReference type="InterPro" id="IPR044835">
    <property type="entry name" value="ARF_plant"/>
</dbReference>
<dbReference type="InterPro" id="IPR033389">
    <property type="entry name" value="AUX/IAA_dom"/>
</dbReference>
<dbReference type="InterPro" id="IPR003340">
    <property type="entry name" value="B3_DNA-bd"/>
</dbReference>
<dbReference type="InterPro" id="IPR015300">
    <property type="entry name" value="DNA-bd_pseudobarrel_sf"/>
</dbReference>
<dbReference type="InterPro" id="IPR053793">
    <property type="entry name" value="PB1-like"/>
</dbReference>
<dbReference type="PANTHER" id="PTHR31384">
    <property type="entry name" value="AUXIN RESPONSE FACTOR 4-RELATED"/>
    <property type="match status" value="1"/>
</dbReference>
<dbReference type="PANTHER" id="PTHR31384:SF10">
    <property type="entry name" value="AUXIN RESPONSE FACTOR 5"/>
    <property type="match status" value="1"/>
</dbReference>
<dbReference type="Pfam" id="PF06507">
    <property type="entry name" value="ARF_AD"/>
    <property type="match status" value="1"/>
</dbReference>
<dbReference type="Pfam" id="PF02309">
    <property type="entry name" value="AUX_IAA"/>
    <property type="match status" value="1"/>
</dbReference>
<dbReference type="Pfam" id="PF02362">
    <property type="entry name" value="B3"/>
    <property type="match status" value="1"/>
</dbReference>
<dbReference type="SMART" id="SM01019">
    <property type="entry name" value="B3"/>
    <property type="match status" value="1"/>
</dbReference>
<dbReference type="SUPFAM" id="SSF54277">
    <property type="entry name" value="CAD &amp; PB1 domains"/>
    <property type="match status" value="1"/>
</dbReference>
<dbReference type="SUPFAM" id="SSF101936">
    <property type="entry name" value="DNA-binding pseudobarrel domain"/>
    <property type="match status" value="1"/>
</dbReference>
<dbReference type="PROSITE" id="PS50863">
    <property type="entry name" value="B3"/>
    <property type="match status" value="1"/>
</dbReference>
<dbReference type="PROSITE" id="PS51745">
    <property type="entry name" value="PB1"/>
    <property type="match status" value="1"/>
</dbReference>
<keyword id="KW-0002">3D-structure</keyword>
<keyword id="KW-0010">Activator</keyword>
<keyword id="KW-0927">Auxin signaling pathway</keyword>
<keyword id="KW-0217">Developmental protein</keyword>
<keyword id="KW-0238">DNA-binding</keyword>
<keyword id="KW-0539">Nucleus</keyword>
<keyword id="KW-1185">Reference proteome</keyword>
<keyword id="KW-0804">Transcription</keyword>
<keyword id="KW-0805">Transcription regulation</keyword>
<reference key="1">
    <citation type="journal article" date="1998" name="EMBO J.">
        <title>The Arabidopsis gene MONOPTEROS encodes a transcription factor mediating embryo axis formation and vascular development.</title>
        <authorList>
            <person name="Hardtke C.S."/>
            <person name="Berleth T."/>
        </authorList>
    </citation>
    <scope>NUCLEOTIDE SEQUENCE [GENOMIC DNA / MRNA]</scope>
    <scope>VARIANT ILE-796</scope>
    <source>
        <strain>cv. Columbia</strain>
    </source>
</reference>
<reference key="2">
    <citation type="journal article" date="2000" name="Nature">
        <title>Sequence and analysis of chromosome 1 of the plant Arabidopsis thaliana.</title>
        <authorList>
            <person name="Theologis A."/>
            <person name="Ecker J.R."/>
            <person name="Palm C.J."/>
            <person name="Federspiel N.A."/>
            <person name="Kaul S."/>
            <person name="White O."/>
            <person name="Alonso J."/>
            <person name="Altafi H."/>
            <person name="Araujo R."/>
            <person name="Bowman C.L."/>
            <person name="Brooks S.Y."/>
            <person name="Buehler E."/>
            <person name="Chan A."/>
            <person name="Chao Q."/>
            <person name="Chen H."/>
            <person name="Cheuk R.F."/>
            <person name="Chin C.W."/>
            <person name="Chung M.K."/>
            <person name="Conn L."/>
            <person name="Conway A.B."/>
            <person name="Conway A.R."/>
            <person name="Creasy T.H."/>
            <person name="Dewar K."/>
            <person name="Dunn P."/>
            <person name="Etgu P."/>
            <person name="Feldblyum T.V."/>
            <person name="Feng J.-D."/>
            <person name="Fong B."/>
            <person name="Fujii C.Y."/>
            <person name="Gill J.E."/>
            <person name="Goldsmith A.D."/>
            <person name="Haas B."/>
            <person name="Hansen N.F."/>
            <person name="Hughes B."/>
            <person name="Huizar L."/>
            <person name="Hunter J.L."/>
            <person name="Jenkins J."/>
            <person name="Johnson-Hopson C."/>
            <person name="Khan S."/>
            <person name="Khaykin E."/>
            <person name="Kim C.J."/>
            <person name="Koo H.L."/>
            <person name="Kremenetskaia I."/>
            <person name="Kurtz D.B."/>
            <person name="Kwan A."/>
            <person name="Lam B."/>
            <person name="Langin-Hooper S."/>
            <person name="Lee A."/>
            <person name="Lee J.M."/>
            <person name="Lenz C.A."/>
            <person name="Li J.H."/>
            <person name="Li Y.-P."/>
            <person name="Lin X."/>
            <person name="Liu S.X."/>
            <person name="Liu Z.A."/>
            <person name="Luros J.S."/>
            <person name="Maiti R."/>
            <person name="Marziali A."/>
            <person name="Militscher J."/>
            <person name="Miranda M."/>
            <person name="Nguyen M."/>
            <person name="Nierman W.C."/>
            <person name="Osborne B.I."/>
            <person name="Pai G."/>
            <person name="Peterson J."/>
            <person name="Pham P.K."/>
            <person name="Rizzo M."/>
            <person name="Rooney T."/>
            <person name="Rowley D."/>
            <person name="Sakano H."/>
            <person name="Salzberg S.L."/>
            <person name="Schwartz J.R."/>
            <person name="Shinn P."/>
            <person name="Southwick A.M."/>
            <person name="Sun H."/>
            <person name="Tallon L.J."/>
            <person name="Tambunga G."/>
            <person name="Toriumi M.J."/>
            <person name="Town C.D."/>
            <person name="Utterback T."/>
            <person name="Van Aken S."/>
            <person name="Vaysberg M."/>
            <person name="Vysotskaia V.S."/>
            <person name="Walker M."/>
            <person name="Wu D."/>
            <person name="Yu G."/>
            <person name="Fraser C.M."/>
            <person name="Venter J.C."/>
            <person name="Davis R.W."/>
        </authorList>
    </citation>
    <scope>NUCLEOTIDE SEQUENCE [LARGE SCALE GENOMIC DNA]</scope>
    <source>
        <strain>cv. Columbia</strain>
    </source>
</reference>
<reference key="3">
    <citation type="journal article" date="2017" name="Plant J.">
        <title>Araport11: a complete reannotation of the Arabidopsis thaliana reference genome.</title>
        <authorList>
            <person name="Cheng C.Y."/>
            <person name="Krishnakumar V."/>
            <person name="Chan A.P."/>
            <person name="Thibaud-Nissen F."/>
            <person name="Schobel S."/>
            <person name="Town C.D."/>
        </authorList>
    </citation>
    <scope>GENOME REANNOTATION</scope>
    <source>
        <strain>cv. Columbia</strain>
    </source>
</reference>
<reference key="4">
    <citation type="journal article" date="2003" name="Science">
        <title>Empirical analysis of transcriptional activity in the Arabidopsis genome.</title>
        <authorList>
            <person name="Yamada K."/>
            <person name="Lim J."/>
            <person name="Dale J.M."/>
            <person name="Chen H."/>
            <person name="Shinn P."/>
            <person name="Palm C.J."/>
            <person name="Southwick A.M."/>
            <person name="Wu H.C."/>
            <person name="Kim C.J."/>
            <person name="Nguyen M."/>
            <person name="Pham P.K."/>
            <person name="Cheuk R.F."/>
            <person name="Karlin-Newmann G."/>
            <person name="Liu S.X."/>
            <person name="Lam B."/>
            <person name="Sakano H."/>
            <person name="Wu T."/>
            <person name="Yu G."/>
            <person name="Miranda M."/>
            <person name="Quach H.L."/>
            <person name="Tripp M."/>
            <person name="Chang C.H."/>
            <person name="Lee J.M."/>
            <person name="Toriumi M.J."/>
            <person name="Chan M.M."/>
            <person name="Tang C.C."/>
            <person name="Onodera C.S."/>
            <person name="Deng J.M."/>
            <person name="Akiyama K."/>
            <person name="Ansari Y."/>
            <person name="Arakawa T."/>
            <person name="Banh J."/>
            <person name="Banno F."/>
            <person name="Bowser L."/>
            <person name="Brooks S.Y."/>
            <person name="Carninci P."/>
            <person name="Chao Q."/>
            <person name="Choy N."/>
            <person name="Enju A."/>
            <person name="Goldsmith A.D."/>
            <person name="Gurjal M."/>
            <person name="Hansen N.F."/>
            <person name="Hayashizaki Y."/>
            <person name="Johnson-Hopson C."/>
            <person name="Hsuan V.W."/>
            <person name="Iida K."/>
            <person name="Karnes M."/>
            <person name="Khan S."/>
            <person name="Koesema E."/>
            <person name="Ishida J."/>
            <person name="Jiang P.X."/>
            <person name="Jones T."/>
            <person name="Kawai J."/>
            <person name="Kamiya A."/>
            <person name="Meyers C."/>
            <person name="Nakajima M."/>
            <person name="Narusaka M."/>
            <person name="Seki M."/>
            <person name="Sakurai T."/>
            <person name="Satou M."/>
            <person name="Tamse R."/>
            <person name="Vaysberg M."/>
            <person name="Wallender E.K."/>
            <person name="Wong C."/>
            <person name="Yamamura Y."/>
            <person name="Yuan S."/>
            <person name="Shinozaki K."/>
            <person name="Davis R.W."/>
            <person name="Theologis A."/>
            <person name="Ecker J.R."/>
        </authorList>
    </citation>
    <scope>NUCLEOTIDE SEQUENCE [LARGE SCALE MRNA]</scope>
    <source>
        <strain>cv. Columbia</strain>
    </source>
</reference>
<reference key="5">
    <citation type="journal article" date="2005" name="Plant Cell">
        <title>The Arabidopsis STV1 protein, responsible for translation reinitiation, is required for auxin-mediated gynoecium patterning.</title>
        <authorList>
            <person name="Nishimura T."/>
            <person name="Wada T."/>
            <person name="Yamamoto K.T."/>
            <person name="Okada K."/>
        </authorList>
    </citation>
    <scope>NUCLEOTIDE SEQUENCE [MRNA] OF 1-75</scope>
    <source>
        <strain>cv. Columbia</strain>
    </source>
</reference>
<reference key="6">
    <citation type="journal article" date="1997" name="Proc. Natl. Acad. Sci. U.S.A.">
        <title>Protein-protein interactions among the Aux/IAA proteins.</title>
        <authorList>
            <person name="Kim J."/>
            <person name="Harter K."/>
            <person name="Theologis A."/>
        </authorList>
    </citation>
    <scope>NUCLEOTIDE SEQUENCE [MRNA] OF 13-902</scope>
    <source>
        <strain>cv. Columbia</strain>
    </source>
</reference>
<reference key="7">
    <citation type="journal article" date="2007" name="Genetics">
        <title>The genetic architecture of shoot branching in Arabidopsis thaliana: a comparative assessment of candidate gene associations vs. quantitative trait locus mapping.</title>
        <authorList>
            <person name="Ehrenreich I.M."/>
            <person name="Stafford P.A."/>
            <person name="Purugganan M.D."/>
        </authorList>
    </citation>
    <scope>NUCLEOTIDE SEQUENCE [GENOMIC DNA] OF 422-690</scope>
    <scope>VARIANTS PHE-439; THR-526 AND 539-GLY--SER-542 DEL</scope>
    <source>
        <strain>cv. Ag-0</strain>
        <strain>cv. An-1</strain>
        <strain>cv. Br-0</strain>
        <strain>cv. C24</strain>
        <strain>cv. Ct-1</strain>
        <strain>cv. Cvi-1</strain>
        <strain>cv. Edi-0</strain>
        <strain>cv. Ga-0</strain>
        <strain>cv. Kas-1</strain>
        <strain>cv. Kin-0</strain>
        <strain>cv. Landsberg erecta</strain>
        <strain>cv. Ll-0</strain>
        <strain>cv. Lz-0</strain>
        <strain>cv. Ms-0</strain>
        <strain>cv. Mt-0</strain>
        <strain>cv. Nd-1</strain>
        <strain>cv. Nok-3</strain>
        <strain>cv. Oy-0</strain>
        <strain>cv. Se-0</strain>
        <strain>cv. Sorbo</strain>
        <strain>cv. Tsu-1</strain>
        <strain>cv. Van-0</strain>
        <strain>cv. Wa-1</strain>
        <strain>cv. Wassilewskija</strain>
    </source>
</reference>
<reference key="8">
    <citation type="journal article" date="1999" name="Plant J.">
        <title>Dimerization and DNA binding of auxin response factors.</title>
        <authorList>
            <person name="Ulmasov T."/>
            <person name="Hagen G."/>
            <person name="Guilfoyle T.J."/>
        </authorList>
    </citation>
    <scope>DIMERIZATION</scope>
    <scope>TISSUE SPECIFICITY</scope>
</reference>
<reference key="9">
    <citation type="journal article" date="1999" name="Proc. Natl. Acad. Sci. U.S.A.">
        <title>Activation and repression of transcription by auxin-response factors.</title>
        <authorList>
            <person name="Ulmasov T."/>
            <person name="Hagen G."/>
            <person name="Guilfoyle T.J."/>
        </authorList>
    </citation>
    <scope>TRANSCRIPTIONAL ACTIVATOR</scope>
</reference>
<reference key="10">
    <citation type="journal article" date="2002" name="Genes Dev.">
        <title>The Arabidopsis BODENLOS gene encodes an auxin response protein inhibiting MONOPTEROS-mediated embryo patterning.</title>
        <authorList>
            <person name="Hamann T."/>
            <person name="Benkova E."/>
            <person name="Baeurle I."/>
            <person name="Kientz M."/>
            <person name="Juergens G."/>
        </authorList>
    </citation>
    <scope>INTERACTION WITH BODENLOS</scope>
</reference>
<reference key="11">
    <citation type="journal article" date="2002" name="Plant Mol. Biol.">
        <title>Auxin-responsive gene expression: genes, promoters and regulatory factors.</title>
        <authorList>
            <person name="Hagen G."/>
            <person name="Guilfoyle T.J."/>
        </authorList>
    </citation>
    <scope>GENE FAMILY</scope>
    <scope>NOMENCLATURE</scope>
    <scope>FUNCTION</scope>
</reference>
<reference key="12">
    <citation type="journal article" date="2004" name="Development">
        <title>Overlapping and non-redundant functions of the Arabidopsis auxin response factors MONOPTEROS and NONPHOTOTROPIC HYPOCOTYL 4.</title>
        <authorList>
            <person name="Hardtke C.S."/>
            <person name="Ckurshumova W."/>
            <person name="Vidaurre D.P."/>
            <person name="Singh S.A."/>
            <person name="Stamatiou G."/>
            <person name="Tiwari S.B."/>
            <person name="Hagen G."/>
            <person name="Guilfoyle T.J."/>
            <person name="Berleth T."/>
        </authorList>
    </citation>
    <scope>FUNCTION</scope>
    <scope>SUBUNIT</scope>
    <scope>INTERACTION WITH ARF7</scope>
</reference>
<reference key="13">
    <citation type="journal article" date="2007" name="Development">
        <title>AMP1 and MP antagonistically regulate embryo and meristem development in Arabidopsis.</title>
        <authorList>
            <person name="Vidaurre D.P."/>
            <person name="Ploense S."/>
            <person name="Krogan N.T."/>
            <person name="Berleth T."/>
        </authorList>
    </citation>
    <scope>FUNCTION</scope>
</reference>
<reference key="14">
    <citation type="journal article" date="2008" name="Trends Plant Sci.">
        <title>The plant B3 superfamily.</title>
        <authorList>
            <person name="Swaminathan K."/>
            <person name="Peterson K."/>
            <person name="Jack T."/>
        </authorList>
    </citation>
    <scope>GENE FAMILY</scope>
</reference>
<reference key="15">
    <citation type="journal article" date="2009" name="Development">
        <title>Dynamic, auxin-responsive plasma membrane-to-nucleus movement of Arabidopsis BRX.</title>
        <authorList>
            <person name="Scacchi E."/>
            <person name="Osmont K.S."/>
            <person name="Beuchat J."/>
            <person name="Salinas P."/>
            <person name="Navarrete-Gomez M."/>
            <person name="Trigueros M."/>
            <person name="Ferrandiz C."/>
            <person name="Hardtke C.S."/>
        </authorList>
    </citation>
    <scope>INTERACTION WITH BRX</scope>
</reference>
<evidence type="ECO:0000255" key="1">
    <source>
        <dbReference type="PROSITE-ProRule" id="PRU00326"/>
    </source>
</evidence>
<evidence type="ECO:0000255" key="2">
    <source>
        <dbReference type="PROSITE-ProRule" id="PRU01081"/>
    </source>
</evidence>
<evidence type="ECO:0000256" key="3">
    <source>
        <dbReference type="SAM" id="MobiDB-lite"/>
    </source>
</evidence>
<evidence type="ECO:0000269" key="4">
    <source>
    </source>
</evidence>
<evidence type="ECO:0000269" key="5">
    <source>
    </source>
</evidence>
<evidence type="ECO:0000269" key="6">
    <source>
    </source>
</evidence>
<evidence type="ECO:0000269" key="7">
    <source>
    </source>
</evidence>
<evidence type="ECO:0000269" key="8">
    <source>
    </source>
</evidence>
<evidence type="ECO:0000269" key="9">
    <source>
    </source>
</evidence>
<evidence type="ECO:0000269" key="10">
    <source>
    </source>
</evidence>
<evidence type="ECO:0000269" key="11">
    <source>
    </source>
</evidence>
<evidence type="ECO:0000305" key="12"/>
<evidence type="ECO:0007829" key="13">
    <source>
        <dbReference type="PDB" id="4CHK"/>
    </source>
</evidence>
<evidence type="ECO:0007829" key="14">
    <source>
        <dbReference type="PDB" id="4LDU"/>
    </source>
</evidence>
<evidence type="ECO:0007829" key="15">
    <source>
        <dbReference type="PDB" id="6L5K"/>
    </source>
</evidence>
<comment type="function">
    <text evidence="5 7 9">Auxin response factors (ARFs) are transcriptional factors that bind specifically to the DNA sequence 5'-TGTCTC-3' found in the auxin-responsive promoter elements (AuxREs). Seems to act as transcriptional activator. Formation of heterodimers with Aux/IAA proteins may alter their ability to modulate early auxin response genes expression. Mediates embryo axis formation and vascular tissues differentiation. Functionally redundant with ARF7. May be necessary to counteract AMP1 activity.</text>
</comment>
<comment type="subunit">
    <text evidence="6 7 10">Homodimers and heterodimers. Interacts with BRX and the auxin-responsive proteins IAA1, IAA12 (BODENLOS), IAA17 and ARF7.</text>
</comment>
<comment type="interaction">
    <interactant intactId="EBI-629519">
        <id>P93024</id>
    </interactant>
    <interactant intactId="EBI-629519">
        <id>P93024</id>
        <label>ARF5</label>
    </interactant>
    <organismsDiffer>false</organismsDiffer>
    <experiments>5</experiments>
</comment>
<comment type="interaction">
    <interactant intactId="EBI-629519">
        <id>P93024</id>
    </interactant>
    <interactant intactId="EBI-630505">
        <id>P49677</id>
        <label>IAA1</label>
    </interactant>
    <organismsDiffer>false</organismsDiffer>
    <experiments>4</experiments>
</comment>
<comment type="interaction">
    <interactant intactId="EBI-629519">
        <id>P93024</id>
    </interactant>
    <interactant intactId="EBI-617608">
        <id>Q38830</id>
        <label>IAA12</label>
    </interactant>
    <organismsDiffer>false</organismsDiffer>
    <experiments>4</experiments>
</comment>
<comment type="interaction">
    <interactant intactId="EBI-629519">
        <id>P93024</id>
    </interactant>
    <interactant intactId="EBI-1554143">
        <id>Q38831</id>
        <label>IAA13</label>
    </interactant>
    <organismsDiffer>false</organismsDiffer>
    <experiments>3</experiments>
</comment>
<comment type="interaction">
    <interactant intactId="EBI-629519">
        <id>P93024</id>
    </interactant>
    <interactant intactId="EBI-2295562">
        <id>Q38832</id>
        <label>IAA14</label>
    </interactant>
    <organismsDiffer>false</organismsDiffer>
    <experiments>3</experiments>
</comment>
<comment type="interaction">
    <interactant intactId="EBI-629519">
        <id>P93024</id>
    </interactant>
    <interactant intactId="EBI-632257">
        <id>O24409</id>
        <label>IAA19</label>
    </interactant>
    <organismsDiffer>false</organismsDiffer>
    <experiments>4</experiments>
</comment>
<comment type="subcellular location">
    <subcellularLocation>
        <location>Nucleus</location>
    </subcellularLocation>
</comment>
<comment type="tissue specificity">
    <text evidence="4">Expressed in the whole plant with a lower expression in leaves. Detected in embryo axis, provascular tissues, procambium and some differentiated vascular regions of mature organs.</text>
</comment>
<comment type="developmental stage">
    <text>In early embryo and during organ development.</text>
</comment>
<comment type="domain">
    <text>Interactions between auxin response factors (ARFs) and Aux/IAA proteins occur through their C-terminal dimerization domains III and IV.</text>
</comment>
<comment type="miscellaneous">
    <text>Absence of the protein probably causes early embryonic lethality. Premature stop codons are associated with vascular defects.</text>
</comment>
<comment type="similarity">
    <text evidence="12">Belongs to the ARF family.</text>
</comment>
<comment type="sequence caution" evidence="12">
    <conflict type="erroneous gene model prediction">
        <sequence resource="EMBL-CDS" id="AAG12546"/>
    </conflict>
</comment>